<comment type="function">
    <text evidence="1">Together with the chaperonin GroEL, plays an essential role in assisting protein folding. The GroEL-GroES system forms a nano-cage that allows encapsulation of the non-native substrate proteins and provides a physical environment optimized to promote and accelerate protein folding. GroES binds to the apical surface of the GroEL ring, thereby capping the opening of the GroEL channel.</text>
</comment>
<comment type="subunit">
    <text evidence="1">Heptamer of 7 subunits arranged in a ring. Interacts with the chaperonin GroEL.</text>
</comment>
<comment type="subcellular location">
    <subcellularLocation>
        <location evidence="1">Cytoplasm</location>
    </subcellularLocation>
</comment>
<comment type="similarity">
    <text evidence="1">Belongs to the GroES chaperonin family.</text>
</comment>
<feature type="chain" id="PRO_0000174759" description="Co-chaperonin GroES">
    <location>
        <begin position="1"/>
        <end position="95"/>
    </location>
</feature>
<accession>Q747C8</accession>
<organism>
    <name type="scientific">Geobacter sulfurreducens (strain ATCC 51573 / DSM 12127 / PCA)</name>
    <dbReference type="NCBI Taxonomy" id="243231"/>
    <lineage>
        <taxon>Bacteria</taxon>
        <taxon>Pseudomonadati</taxon>
        <taxon>Thermodesulfobacteriota</taxon>
        <taxon>Desulfuromonadia</taxon>
        <taxon>Geobacterales</taxon>
        <taxon>Geobacteraceae</taxon>
        <taxon>Geobacter</taxon>
    </lineage>
</organism>
<reference key="1">
    <citation type="journal article" date="2003" name="Science">
        <title>Genome of Geobacter sulfurreducens: metal reduction in subsurface environments.</title>
        <authorList>
            <person name="Methe B.A."/>
            <person name="Nelson K.E."/>
            <person name="Eisen J.A."/>
            <person name="Paulsen I.T."/>
            <person name="Nelson W.C."/>
            <person name="Heidelberg J.F."/>
            <person name="Wu D."/>
            <person name="Wu M."/>
            <person name="Ward N.L."/>
            <person name="Beanan M.J."/>
            <person name="Dodson R.J."/>
            <person name="Madupu R."/>
            <person name="Brinkac L.M."/>
            <person name="Daugherty S.C."/>
            <person name="DeBoy R.T."/>
            <person name="Durkin A.S."/>
            <person name="Gwinn M.L."/>
            <person name="Kolonay J.F."/>
            <person name="Sullivan S.A."/>
            <person name="Haft D.H."/>
            <person name="Selengut J."/>
            <person name="Davidsen T.M."/>
            <person name="Zafar N."/>
            <person name="White O."/>
            <person name="Tran B."/>
            <person name="Romero C."/>
            <person name="Forberger H.A."/>
            <person name="Weidman J.F."/>
            <person name="Khouri H.M."/>
            <person name="Feldblyum T.V."/>
            <person name="Utterback T.R."/>
            <person name="Van Aken S.E."/>
            <person name="Lovley D.R."/>
            <person name="Fraser C.M."/>
        </authorList>
    </citation>
    <scope>NUCLEOTIDE SEQUENCE [LARGE SCALE GENOMIC DNA]</scope>
    <source>
        <strain>ATCC 51573 / DSM 12127 / PCA</strain>
    </source>
</reference>
<protein>
    <recommendedName>
        <fullName evidence="1">Co-chaperonin GroES</fullName>
    </recommendedName>
    <alternativeName>
        <fullName evidence="1">10 kDa chaperonin</fullName>
    </alternativeName>
    <alternativeName>
        <fullName evidence="1">Chaperonin-10</fullName>
        <shortName evidence="1">Cpn10</shortName>
    </alternativeName>
</protein>
<evidence type="ECO:0000255" key="1">
    <source>
        <dbReference type="HAMAP-Rule" id="MF_00580"/>
    </source>
</evidence>
<name>CH10_GEOSL</name>
<sequence>MNLRPLQDRILVKRIEEETKTAGGIFIPDTAKEKPQRGEIVAVGNGKKTEDGKVIPVDLKVGDKVLFGKYAGTDIKIEGQEFLIMREDDILGVIE</sequence>
<gene>
    <name evidence="1" type="primary">groES</name>
    <name evidence="1" type="synonym">groS</name>
    <name type="ordered locus">GSU3339</name>
</gene>
<keyword id="KW-0143">Chaperone</keyword>
<keyword id="KW-0963">Cytoplasm</keyword>
<keyword id="KW-1185">Reference proteome</keyword>
<proteinExistence type="inferred from homology"/>
<dbReference type="EMBL" id="AE017180">
    <property type="protein sequence ID" value="AAR36729.1"/>
    <property type="molecule type" value="Genomic_DNA"/>
</dbReference>
<dbReference type="RefSeq" id="NP_954379.1">
    <property type="nucleotide sequence ID" value="NC_002939.5"/>
</dbReference>
<dbReference type="RefSeq" id="WP_010943951.1">
    <property type="nucleotide sequence ID" value="NC_002939.5"/>
</dbReference>
<dbReference type="SMR" id="Q747C8"/>
<dbReference type="FunCoup" id="Q747C8">
    <property type="interactions" value="546"/>
</dbReference>
<dbReference type="STRING" id="243231.GSU3339"/>
<dbReference type="EnsemblBacteria" id="AAR36729">
    <property type="protein sequence ID" value="AAR36729"/>
    <property type="gene ID" value="GSU3339"/>
</dbReference>
<dbReference type="KEGG" id="gsu:GSU3339"/>
<dbReference type="PATRIC" id="fig|243231.5.peg.3360"/>
<dbReference type="eggNOG" id="COG0234">
    <property type="taxonomic scope" value="Bacteria"/>
</dbReference>
<dbReference type="HOGENOM" id="CLU_132825_2_0_7"/>
<dbReference type="InParanoid" id="Q747C8"/>
<dbReference type="OrthoDB" id="9806791at2"/>
<dbReference type="Proteomes" id="UP000000577">
    <property type="component" value="Chromosome"/>
</dbReference>
<dbReference type="GO" id="GO:0005737">
    <property type="term" value="C:cytoplasm"/>
    <property type="evidence" value="ECO:0007669"/>
    <property type="project" value="UniProtKB-SubCell"/>
</dbReference>
<dbReference type="GO" id="GO:0005524">
    <property type="term" value="F:ATP binding"/>
    <property type="evidence" value="ECO:0007669"/>
    <property type="project" value="InterPro"/>
</dbReference>
<dbReference type="GO" id="GO:0046872">
    <property type="term" value="F:metal ion binding"/>
    <property type="evidence" value="ECO:0000318"/>
    <property type="project" value="GO_Central"/>
</dbReference>
<dbReference type="GO" id="GO:0044183">
    <property type="term" value="F:protein folding chaperone"/>
    <property type="evidence" value="ECO:0007669"/>
    <property type="project" value="InterPro"/>
</dbReference>
<dbReference type="GO" id="GO:0051087">
    <property type="term" value="F:protein-folding chaperone binding"/>
    <property type="evidence" value="ECO:0000318"/>
    <property type="project" value="GO_Central"/>
</dbReference>
<dbReference type="GO" id="GO:0051082">
    <property type="term" value="F:unfolded protein binding"/>
    <property type="evidence" value="ECO:0000318"/>
    <property type="project" value="GO_Central"/>
</dbReference>
<dbReference type="GO" id="GO:0051085">
    <property type="term" value="P:chaperone cofactor-dependent protein refolding"/>
    <property type="evidence" value="ECO:0000318"/>
    <property type="project" value="GO_Central"/>
</dbReference>
<dbReference type="CDD" id="cd00320">
    <property type="entry name" value="cpn10"/>
    <property type="match status" value="1"/>
</dbReference>
<dbReference type="FunFam" id="2.30.33.40:FF:000001">
    <property type="entry name" value="10 kDa chaperonin"/>
    <property type="match status" value="1"/>
</dbReference>
<dbReference type="Gene3D" id="2.30.33.40">
    <property type="entry name" value="GroES chaperonin"/>
    <property type="match status" value="1"/>
</dbReference>
<dbReference type="HAMAP" id="MF_00580">
    <property type="entry name" value="CH10"/>
    <property type="match status" value="1"/>
</dbReference>
<dbReference type="InterPro" id="IPR020818">
    <property type="entry name" value="Chaperonin_GroES"/>
</dbReference>
<dbReference type="InterPro" id="IPR037124">
    <property type="entry name" value="Chaperonin_GroES_sf"/>
</dbReference>
<dbReference type="InterPro" id="IPR018369">
    <property type="entry name" value="Chaprnonin_Cpn10_CS"/>
</dbReference>
<dbReference type="InterPro" id="IPR011032">
    <property type="entry name" value="GroES-like_sf"/>
</dbReference>
<dbReference type="NCBIfam" id="NF001527">
    <property type="entry name" value="PRK00364.1-2"/>
    <property type="match status" value="1"/>
</dbReference>
<dbReference type="NCBIfam" id="NF001529">
    <property type="entry name" value="PRK00364.1-5"/>
    <property type="match status" value="1"/>
</dbReference>
<dbReference type="NCBIfam" id="NF001530">
    <property type="entry name" value="PRK00364.1-6"/>
    <property type="match status" value="1"/>
</dbReference>
<dbReference type="NCBIfam" id="NF001531">
    <property type="entry name" value="PRK00364.2-2"/>
    <property type="match status" value="1"/>
</dbReference>
<dbReference type="NCBIfam" id="NF001533">
    <property type="entry name" value="PRK00364.2-4"/>
    <property type="match status" value="1"/>
</dbReference>
<dbReference type="NCBIfam" id="NF001534">
    <property type="entry name" value="PRK00364.2-5"/>
    <property type="match status" value="1"/>
</dbReference>
<dbReference type="NCBIfam" id="NF001537">
    <property type="entry name" value="PRK00364.3-3"/>
    <property type="match status" value="1"/>
</dbReference>
<dbReference type="PANTHER" id="PTHR10772">
    <property type="entry name" value="10 KDA HEAT SHOCK PROTEIN"/>
    <property type="match status" value="1"/>
</dbReference>
<dbReference type="PANTHER" id="PTHR10772:SF58">
    <property type="entry name" value="CO-CHAPERONIN GROES"/>
    <property type="match status" value="1"/>
</dbReference>
<dbReference type="Pfam" id="PF00166">
    <property type="entry name" value="Cpn10"/>
    <property type="match status" value="1"/>
</dbReference>
<dbReference type="PRINTS" id="PR00297">
    <property type="entry name" value="CHAPERONIN10"/>
</dbReference>
<dbReference type="SMART" id="SM00883">
    <property type="entry name" value="Cpn10"/>
    <property type="match status" value="1"/>
</dbReference>
<dbReference type="SUPFAM" id="SSF50129">
    <property type="entry name" value="GroES-like"/>
    <property type="match status" value="1"/>
</dbReference>
<dbReference type="PROSITE" id="PS00681">
    <property type="entry name" value="CHAPERONINS_CPN10"/>
    <property type="match status" value="1"/>
</dbReference>